<reference key="1">
    <citation type="journal article" date="2008" name="PLoS ONE">
        <title>Genome biology of Actinobacillus pleuropneumoniae JL03, an isolate of serotype 3 prevalent in China.</title>
        <authorList>
            <person name="Xu Z."/>
            <person name="Zhou Y."/>
            <person name="Li L."/>
            <person name="Zhou R."/>
            <person name="Xiao S."/>
            <person name="Wan Y."/>
            <person name="Zhang S."/>
            <person name="Wang K."/>
            <person name="Li W."/>
            <person name="Li L."/>
            <person name="Jin H."/>
            <person name="Kang M."/>
            <person name="Dalai B."/>
            <person name="Li T."/>
            <person name="Liu L."/>
            <person name="Cheng Y."/>
            <person name="Zhang L."/>
            <person name="Xu T."/>
            <person name="Zheng H."/>
            <person name="Pu S."/>
            <person name="Wang B."/>
            <person name="Gu W."/>
            <person name="Zhang X.L."/>
            <person name="Zhu G.-F."/>
            <person name="Wang S."/>
            <person name="Zhao G.-P."/>
            <person name="Chen H."/>
        </authorList>
    </citation>
    <scope>NUCLEOTIDE SEQUENCE [LARGE SCALE GENOMIC DNA]</scope>
    <source>
        <strain>JL03</strain>
    </source>
</reference>
<protein>
    <recommendedName>
        <fullName evidence="1">Large ribosomal subunit protein uL29</fullName>
    </recommendedName>
    <alternativeName>
        <fullName evidence="2">50S ribosomal protein L29</fullName>
    </alternativeName>
</protein>
<dbReference type="EMBL" id="CP000687">
    <property type="protein sequence ID" value="ABY70353.1"/>
    <property type="molecule type" value="Genomic_DNA"/>
</dbReference>
<dbReference type="RefSeq" id="WP_005599295.1">
    <property type="nucleotide sequence ID" value="NC_010278.1"/>
</dbReference>
<dbReference type="SMR" id="B0BST9"/>
<dbReference type="GeneID" id="92743647"/>
<dbReference type="KEGG" id="apj:APJL_1803"/>
<dbReference type="HOGENOM" id="CLU_158491_1_2_6"/>
<dbReference type="Proteomes" id="UP000008547">
    <property type="component" value="Chromosome"/>
</dbReference>
<dbReference type="GO" id="GO:0022625">
    <property type="term" value="C:cytosolic large ribosomal subunit"/>
    <property type="evidence" value="ECO:0007669"/>
    <property type="project" value="TreeGrafter"/>
</dbReference>
<dbReference type="GO" id="GO:0003735">
    <property type="term" value="F:structural constituent of ribosome"/>
    <property type="evidence" value="ECO:0007669"/>
    <property type="project" value="InterPro"/>
</dbReference>
<dbReference type="GO" id="GO:0006412">
    <property type="term" value="P:translation"/>
    <property type="evidence" value="ECO:0007669"/>
    <property type="project" value="UniProtKB-UniRule"/>
</dbReference>
<dbReference type="CDD" id="cd00427">
    <property type="entry name" value="Ribosomal_L29_HIP"/>
    <property type="match status" value="1"/>
</dbReference>
<dbReference type="FunFam" id="1.10.287.310:FF:000001">
    <property type="entry name" value="50S ribosomal protein L29"/>
    <property type="match status" value="1"/>
</dbReference>
<dbReference type="Gene3D" id="1.10.287.310">
    <property type="match status" value="1"/>
</dbReference>
<dbReference type="HAMAP" id="MF_00374">
    <property type="entry name" value="Ribosomal_uL29"/>
    <property type="match status" value="1"/>
</dbReference>
<dbReference type="InterPro" id="IPR050063">
    <property type="entry name" value="Ribosomal_protein_uL29"/>
</dbReference>
<dbReference type="InterPro" id="IPR001854">
    <property type="entry name" value="Ribosomal_uL29"/>
</dbReference>
<dbReference type="InterPro" id="IPR018254">
    <property type="entry name" value="Ribosomal_uL29_CS"/>
</dbReference>
<dbReference type="InterPro" id="IPR036049">
    <property type="entry name" value="Ribosomal_uL29_sf"/>
</dbReference>
<dbReference type="NCBIfam" id="TIGR00012">
    <property type="entry name" value="L29"/>
    <property type="match status" value="1"/>
</dbReference>
<dbReference type="PANTHER" id="PTHR10916">
    <property type="entry name" value="60S RIBOSOMAL PROTEIN L35/50S RIBOSOMAL PROTEIN L29"/>
    <property type="match status" value="1"/>
</dbReference>
<dbReference type="PANTHER" id="PTHR10916:SF0">
    <property type="entry name" value="LARGE RIBOSOMAL SUBUNIT PROTEIN UL29C"/>
    <property type="match status" value="1"/>
</dbReference>
<dbReference type="Pfam" id="PF00831">
    <property type="entry name" value="Ribosomal_L29"/>
    <property type="match status" value="1"/>
</dbReference>
<dbReference type="SUPFAM" id="SSF46561">
    <property type="entry name" value="Ribosomal protein L29 (L29p)"/>
    <property type="match status" value="1"/>
</dbReference>
<dbReference type="PROSITE" id="PS00579">
    <property type="entry name" value="RIBOSOMAL_L29"/>
    <property type="match status" value="1"/>
</dbReference>
<gene>
    <name evidence="1" type="primary">rpmC</name>
    <name type="ordered locus">APJL_1803</name>
</gene>
<comment type="similarity">
    <text evidence="1">Belongs to the universal ribosomal protein uL29 family.</text>
</comment>
<organism>
    <name type="scientific">Actinobacillus pleuropneumoniae serotype 3 (strain JL03)</name>
    <dbReference type="NCBI Taxonomy" id="434271"/>
    <lineage>
        <taxon>Bacteria</taxon>
        <taxon>Pseudomonadati</taxon>
        <taxon>Pseudomonadota</taxon>
        <taxon>Gammaproteobacteria</taxon>
        <taxon>Pasteurellales</taxon>
        <taxon>Pasteurellaceae</taxon>
        <taxon>Actinobacillus</taxon>
    </lineage>
</organism>
<evidence type="ECO:0000255" key="1">
    <source>
        <dbReference type="HAMAP-Rule" id="MF_00374"/>
    </source>
</evidence>
<evidence type="ECO:0000305" key="2"/>
<feature type="chain" id="PRO_1000121724" description="Large ribosomal subunit protein uL29">
    <location>
        <begin position="1"/>
        <end position="63"/>
    </location>
</feature>
<name>RL29_ACTPJ</name>
<proteinExistence type="inferred from homology"/>
<accession>B0BST9</accession>
<keyword id="KW-0687">Ribonucleoprotein</keyword>
<keyword id="KW-0689">Ribosomal protein</keyword>
<sequence>MKAQELRNKNVEELNAELINLLGEQFKLRMQAATGQLQQTHQLKQVRRSIAQVKTVLTEKAGE</sequence>